<feature type="chain" id="PRO_1000191630" description="Malate dehydrogenase">
    <location>
        <begin position="1"/>
        <end position="328"/>
    </location>
</feature>
<feature type="active site" description="Proton acceptor" evidence="1">
    <location>
        <position position="189"/>
    </location>
</feature>
<feature type="binding site" evidence="1">
    <location>
        <begin position="11"/>
        <end position="17"/>
    </location>
    <ligand>
        <name>NAD(+)</name>
        <dbReference type="ChEBI" id="CHEBI:57540"/>
    </ligand>
</feature>
<feature type="binding site" evidence="1">
    <location>
        <position position="94"/>
    </location>
    <ligand>
        <name>substrate</name>
    </ligand>
</feature>
<feature type="binding site" evidence="1">
    <location>
        <position position="100"/>
    </location>
    <ligand>
        <name>substrate</name>
    </ligand>
</feature>
<feature type="binding site" evidence="1">
    <location>
        <position position="107"/>
    </location>
    <ligand>
        <name>NAD(+)</name>
        <dbReference type="ChEBI" id="CHEBI:57540"/>
    </ligand>
</feature>
<feature type="binding site" evidence="1">
    <location>
        <position position="114"/>
    </location>
    <ligand>
        <name>NAD(+)</name>
        <dbReference type="ChEBI" id="CHEBI:57540"/>
    </ligand>
</feature>
<feature type="binding site" evidence="1">
    <location>
        <begin position="131"/>
        <end position="133"/>
    </location>
    <ligand>
        <name>NAD(+)</name>
        <dbReference type="ChEBI" id="CHEBI:57540"/>
    </ligand>
</feature>
<feature type="binding site" evidence="1">
    <location>
        <position position="133"/>
    </location>
    <ligand>
        <name>substrate</name>
    </ligand>
</feature>
<feature type="binding site" evidence="1">
    <location>
        <position position="164"/>
    </location>
    <ligand>
        <name>substrate</name>
    </ligand>
</feature>
<sequence>MKAPVRVAVTGAAGQIGYALLFRIASGEMLGKDQPVILQLLELPVDKAQAALKGVMMELEDCAFPLLAGMVGTDDAEVAFKDADIALLVGARPRGPGMERKDLLLENAKIFTAQGAALNKVASRDVKVLVVGNPANTNAYIAMKSAPDLKPENFTAMLRLDHNRALSQLSAKLGKPVGGMEKLVVWGNHSPTMYPDYRFATADGASIADAINDQEWNANTFIPTVGKRGAAIIEARGSSSAASAANAAIDHVRDWVLGSNGKWVTMGVPSDGSYGIPEGVIFGFAVTTENGKYTLVKDLPVDDFSQKYIDKTLAELEEERSGVAHLLG</sequence>
<reference key="1">
    <citation type="submission" date="2008-06" db="EMBL/GenBank/DDBJ databases">
        <title>Complete sequence of Stenotrophomonas maltophilia R551-3.</title>
        <authorList>
            <consortium name="US DOE Joint Genome Institute"/>
            <person name="Lucas S."/>
            <person name="Copeland A."/>
            <person name="Lapidus A."/>
            <person name="Glavina del Rio T."/>
            <person name="Dalin E."/>
            <person name="Tice H."/>
            <person name="Pitluck S."/>
            <person name="Chain P."/>
            <person name="Malfatti S."/>
            <person name="Shin M."/>
            <person name="Vergez L."/>
            <person name="Lang D."/>
            <person name="Schmutz J."/>
            <person name="Larimer F."/>
            <person name="Land M."/>
            <person name="Hauser L."/>
            <person name="Kyrpides N."/>
            <person name="Mikhailova N."/>
            <person name="Taghavi S."/>
            <person name="Monchy S."/>
            <person name="Newman L."/>
            <person name="Vangronsveld J."/>
            <person name="van der Lelie D."/>
            <person name="Richardson P."/>
        </authorList>
    </citation>
    <scope>NUCLEOTIDE SEQUENCE [LARGE SCALE GENOMIC DNA]</scope>
    <source>
        <strain>R551-3</strain>
    </source>
</reference>
<gene>
    <name evidence="1" type="primary">mdh</name>
    <name type="ordered locus">Smal_0790</name>
</gene>
<accession>B4SLI5</accession>
<organism>
    <name type="scientific">Stenotrophomonas maltophilia (strain R551-3)</name>
    <dbReference type="NCBI Taxonomy" id="391008"/>
    <lineage>
        <taxon>Bacteria</taxon>
        <taxon>Pseudomonadati</taxon>
        <taxon>Pseudomonadota</taxon>
        <taxon>Gammaproteobacteria</taxon>
        <taxon>Lysobacterales</taxon>
        <taxon>Lysobacteraceae</taxon>
        <taxon>Stenotrophomonas</taxon>
        <taxon>Stenotrophomonas maltophilia group</taxon>
    </lineage>
</organism>
<comment type="function">
    <text evidence="1">Catalyzes the reversible oxidation of malate to oxaloacetate.</text>
</comment>
<comment type="catalytic activity">
    <reaction evidence="1">
        <text>(S)-malate + NAD(+) = oxaloacetate + NADH + H(+)</text>
        <dbReference type="Rhea" id="RHEA:21432"/>
        <dbReference type="ChEBI" id="CHEBI:15378"/>
        <dbReference type="ChEBI" id="CHEBI:15589"/>
        <dbReference type="ChEBI" id="CHEBI:16452"/>
        <dbReference type="ChEBI" id="CHEBI:57540"/>
        <dbReference type="ChEBI" id="CHEBI:57945"/>
        <dbReference type="EC" id="1.1.1.37"/>
    </reaction>
</comment>
<comment type="similarity">
    <text evidence="1">Belongs to the LDH/MDH superfamily. MDH type 2 family.</text>
</comment>
<keyword id="KW-0520">NAD</keyword>
<keyword id="KW-0560">Oxidoreductase</keyword>
<keyword id="KW-0816">Tricarboxylic acid cycle</keyword>
<dbReference type="EC" id="1.1.1.37" evidence="1"/>
<dbReference type="EMBL" id="CP001111">
    <property type="protein sequence ID" value="ACF50495.1"/>
    <property type="molecule type" value="Genomic_DNA"/>
</dbReference>
<dbReference type="RefSeq" id="WP_004145527.1">
    <property type="nucleotide sequence ID" value="NC_011071.1"/>
</dbReference>
<dbReference type="SMR" id="B4SLI5"/>
<dbReference type="STRING" id="391008.Smal_0790"/>
<dbReference type="KEGG" id="smt:Smal_0790"/>
<dbReference type="eggNOG" id="COG0039">
    <property type="taxonomic scope" value="Bacteria"/>
</dbReference>
<dbReference type="HOGENOM" id="CLU_040727_2_0_6"/>
<dbReference type="OrthoDB" id="9802969at2"/>
<dbReference type="Proteomes" id="UP000001867">
    <property type="component" value="Chromosome"/>
</dbReference>
<dbReference type="GO" id="GO:0030060">
    <property type="term" value="F:L-malate dehydrogenase (NAD+) activity"/>
    <property type="evidence" value="ECO:0007669"/>
    <property type="project" value="UniProtKB-UniRule"/>
</dbReference>
<dbReference type="GO" id="GO:0006108">
    <property type="term" value="P:malate metabolic process"/>
    <property type="evidence" value="ECO:0007669"/>
    <property type="project" value="InterPro"/>
</dbReference>
<dbReference type="GO" id="GO:0006099">
    <property type="term" value="P:tricarboxylic acid cycle"/>
    <property type="evidence" value="ECO:0007669"/>
    <property type="project" value="UniProtKB-UniRule"/>
</dbReference>
<dbReference type="CDD" id="cd01338">
    <property type="entry name" value="MDH_chloroplast-like"/>
    <property type="match status" value="1"/>
</dbReference>
<dbReference type="FunFam" id="3.40.50.720:FF:000010">
    <property type="entry name" value="Malate dehydrogenase"/>
    <property type="match status" value="1"/>
</dbReference>
<dbReference type="FunFam" id="3.90.110.10:FF:000002">
    <property type="entry name" value="Malate dehydrogenase"/>
    <property type="match status" value="1"/>
</dbReference>
<dbReference type="Gene3D" id="3.90.110.10">
    <property type="entry name" value="Lactate dehydrogenase/glycoside hydrolase, family 4, C-terminal"/>
    <property type="match status" value="1"/>
</dbReference>
<dbReference type="Gene3D" id="3.40.50.720">
    <property type="entry name" value="NAD(P)-binding Rossmann-like Domain"/>
    <property type="match status" value="1"/>
</dbReference>
<dbReference type="HAMAP" id="MF_01517">
    <property type="entry name" value="Malate_dehydrog_2"/>
    <property type="match status" value="1"/>
</dbReference>
<dbReference type="InterPro" id="IPR001557">
    <property type="entry name" value="L-lactate/malate_DH"/>
</dbReference>
<dbReference type="InterPro" id="IPR022383">
    <property type="entry name" value="Lactate/malate_DH_C"/>
</dbReference>
<dbReference type="InterPro" id="IPR001236">
    <property type="entry name" value="Lactate/malate_DH_N"/>
</dbReference>
<dbReference type="InterPro" id="IPR015955">
    <property type="entry name" value="Lactate_DH/Glyco_Ohase_4_C"/>
</dbReference>
<dbReference type="InterPro" id="IPR010945">
    <property type="entry name" value="Malate_DH_type2"/>
</dbReference>
<dbReference type="InterPro" id="IPR036291">
    <property type="entry name" value="NAD(P)-bd_dom_sf"/>
</dbReference>
<dbReference type="NCBIfam" id="TIGR01759">
    <property type="entry name" value="MalateDH-SF1"/>
    <property type="match status" value="1"/>
</dbReference>
<dbReference type="NCBIfam" id="NF003916">
    <property type="entry name" value="PRK05442.1"/>
    <property type="match status" value="1"/>
</dbReference>
<dbReference type="PANTHER" id="PTHR23382">
    <property type="entry name" value="MALATE DEHYDROGENASE"/>
    <property type="match status" value="1"/>
</dbReference>
<dbReference type="Pfam" id="PF02866">
    <property type="entry name" value="Ldh_1_C"/>
    <property type="match status" value="1"/>
</dbReference>
<dbReference type="Pfam" id="PF00056">
    <property type="entry name" value="Ldh_1_N"/>
    <property type="match status" value="1"/>
</dbReference>
<dbReference type="PIRSF" id="PIRSF000102">
    <property type="entry name" value="Lac_mal_DH"/>
    <property type="match status" value="1"/>
</dbReference>
<dbReference type="SUPFAM" id="SSF56327">
    <property type="entry name" value="LDH C-terminal domain-like"/>
    <property type="match status" value="1"/>
</dbReference>
<dbReference type="SUPFAM" id="SSF51735">
    <property type="entry name" value="NAD(P)-binding Rossmann-fold domains"/>
    <property type="match status" value="1"/>
</dbReference>
<evidence type="ECO:0000255" key="1">
    <source>
        <dbReference type="HAMAP-Rule" id="MF_01517"/>
    </source>
</evidence>
<proteinExistence type="inferred from homology"/>
<name>MDH_STRM5</name>
<protein>
    <recommendedName>
        <fullName evidence="1">Malate dehydrogenase</fullName>
        <ecNumber evidence="1">1.1.1.37</ecNumber>
    </recommendedName>
</protein>